<feature type="chain" id="PRO_1000025777" description="Chaperonin GroEL">
    <location>
        <begin position="1"/>
        <end position="547"/>
    </location>
</feature>
<feature type="binding site" evidence="1">
    <location>
        <begin position="30"/>
        <end position="33"/>
    </location>
    <ligand>
        <name>ATP</name>
        <dbReference type="ChEBI" id="CHEBI:30616"/>
    </ligand>
</feature>
<feature type="binding site" evidence="1">
    <location>
        <position position="51"/>
    </location>
    <ligand>
        <name>ATP</name>
        <dbReference type="ChEBI" id="CHEBI:30616"/>
    </ligand>
</feature>
<feature type="binding site" evidence="1">
    <location>
        <begin position="87"/>
        <end position="91"/>
    </location>
    <ligand>
        <name>ATP</name>
        <dbReference type="ChEBI" id="CHEBI:30616"/>
    </ligand>
</feature>
<feature type="binding site" evidence="1">
    <location>
        <position position="415"/>
    </location>
    <ligand>
        <name>ATP</name>
        <dbReference type="ChEBI" id="CHEBI:30616"/>
    </ligand>
</feature>
<feature type="binding site" evidence="1">
    <location>
        <begin position="479"/>
        <end position="481"/>
    </location>
    <ligand>
        <name>ATP</name>
        <dbReference type="ChEBI" id="CHEBI:30616"/>
    </ligand>
</feature>
<feature type="binding site" evidence="1">
    <location>
        <position position="495"/>
    </location>
    <ligand>
        <name>ATP</name>
        <dbReference type="ChEBI" id="CHEBI:30616"/>
    </ligand>
</feature>
<comment type="function">
    <text evidence="1">Together with its co-chaperonin GroES, plays an essential role in assisting protein folding. The GroEL-GroES system forms a nano-cage that allows encapsulation of the non-native substrate proteins and provides a physical environment optimized to promote and accelerate protein folding.</text>
</comment>
<comment type="catalytic activity">
    <reaction evidence="1">
        <text>ATP + H2O + a folded polypeptide = ADP + phosphate + an unfolded polypeptide.</text>
        <dbReference type="EC" id="5.6.1.7"/>
    </reaction>
</comment>
<comment type="subunit">
    <text evidence="1">Forms a cylinder of 14 subunits composed of two heptameric rings stacked back-to-back. Interacts with the co-chaperonin GroES.</text>
</comment>
<comment type="subcellular location">
    <subcellularLocation>
        <location evidence="1">Cytoplasm</location>
    </subcellularLocation>
</comment>
<comment type="similarity">
    <text evidence="1">Belongs to the chaperonin (HSP60) family.</text>
</comment>
<sequence length="547" mass="57629">MSAKEVRFGEDARNKMLKGVNILADAVKVTLGPKGRNVILDKSFGTPTVTKDGVSVAKEIELADKFENMGAQLVKEVASQTNDAAGDGTTTATVLAQAIVVEGLKAVAAGMNPMDLKRGIDKAVAEAVKTLHAISKPCSDSKAIAQVGTISANSDETVGAKIAEAMEKVGKEGVITVEEGQGLEDSLEVVEGMQFDRGYLSPYFINNQQSQQVELENPYILLHDKKIANIRDMLPLLEGVAKSGQPLLIVAEDVEGEALATLVINSMRGIVKVAAVKAPGFGDRRKAMLEDIAILTGGTVISEEVGLTLESVTLDQLGTAKRVTVGKDNTTIIDGSGEKSAIEARVALIRHQIEESSSDYDKEKLQERVAKLAGGVAVIKVGAATEVEMKEKKDRVEDALHATRAAVEEGIVPGGGVALIRAINSIVDLKGDNYDQQVGIDIARRAMEYPLRTIVSNAGSEAAVVLERVKSGKGNDGYDAATGQYVDMVAAGIIDPTKVTRSALQNAASVAGLMITTEAMVSEIPQKEEGHHHDMGGMGGMGGMGMM</sequence>
<keyword id="KW-0067">ATP-binding</keyword>
<keyword id="KW-0143">Chaperone</keyword>
<keyword id="KW-0963">Cytoplasm</keyword>
<keyword id="KW-0413">Isomerase</keyword>
<keyword id="KW-0547">Nucleotide-binding</keyword>
<keyword id="KW-1185">Reference proteome</keyword>
<name>CH60_DICNV</name>
<protein>
    <recommendedName>
        <fullName evidence="1">Chaperonin GroEL</fullName>
        <ecNumber evidence="1">5.6.1.7</ecNumber>
    </recommendedName>
    <alternativeName>
        <fullName evidence="1">60 kDa chaperonin</fullName>
    </alternativeName>
    <alternativeName>
        <fullName evidence="1">Chaperonin-60</fullName>
        <shortName evidence="1">Cpn60</shortName>
    </alternativeName>
</protein>
<organism>
    <name type="scientific">Dichelobacter nodosus (strain VCS1703A)</name>
    <dbReference type="NCBI Taxonomy" id="246195"/>
    <lineage>
        <taxon>Bacteria</taxon>
        <taxon>Pseudomonadati</taxon>
        <taxon>Pseudomonadota</taxon>
        <taxon>Gammaproteobacteria</taxon>
        <taxon>Cardiobacteriales</taxon>
        <taxon>Cardiobacteriaceae</taxon>
        <taxon>Dichelobacter</taxon>
    </lineage>
</organism>
<accession>A5EX17</accession>
<gene>
    <name evidence="1" type="primary">groEL</name>
    <name evidence="1" type="synonym">groL</name>
    <name type="ordered locus">DNO_1339</name>
</gene>
<dbReference type="EC" id="5.6.1.7" evidence="1"/>
<dbReference type="EMBL" id="CP000513">
    <property type="protein sequence ID" value="ABQ13553.1"/>
    <property type="molecule type" value="Genomic_DNA"/>
</dbReference>
<dbReference type="RefSeq" id="WP_012031623.1">
    <property type="nucleotide sequence ID" value="NC_009446.1"/>
</dbReference>
<dbReference type="SMR" id="A5EX17"/>
<dbReference type="STRING" id="246195.DNO_1339"/>
<dbReference type="KEGG" id="dno:DNO_1339"/>
<dbReference type="eggNOG" id="COG0459">
    <property type="taxonomic scope" value="Bacteria"/>
</dbReference>
<dbReference type="HOGENOM" id="CLU_016503_3_0_6"/>
<dbReference type="OrthoDB" id="9766614at2"/>
<dbReference type="Proteomes" id="UP000000248">
    <property type="component" value="Chromosome"/>
</dbReference>
<dbReference type="GO" id="GO:0005737">
    <property type="term" value="C:cytoplasm"/>
    <property type="evidence" value="ECO:0007669"/>
    <property type="project" value="UniProtKB-SubCell"/>
</dbReference>
<dbReference type="GO" id="GO:0005524">
    <property type="term" value="F:ATP binding"/>
    <property type="evidence" value="ECO:0007669"/>
    <property type="project" value="UniProtKB-UniRule"/>
</dbReference>
<dbReference type="GO" id="GO:0140662">
    <property type="term" value="F:ATP-dependent protein folding chaperone"/>
    <property type="evidence" value="ECO:0007669"/>
    <property type="project" value="InterPro"/>
</dbReference>
<dbReference type="GO" id="GO:0016853">
    <property type="term" value="F:isomerase activity"/>
    <property type="evidence" value="ECO:0007669"/>
    <property type="project" value="UniProtKB-KW"/>
</dbReference>
<dbReference type="GO" id="GO:0051082">
    <property type="term" value="F:unfolded protein binding"/>
    <property type="evidence" value="ECO:0007669"/>
    <property type="project" value="UniProtKB-UniRule"/>
</dbReference>
<dbReference type="GO" id="GO:0042026">
    <property type="term" value="P:protein refolding"/>
    <property type="evidence" value="ECO:0007669"/>
    <property type="project" value="UniProtKB-UniRule"/>
</dbReference>
<dbReference type="CDD" id="cd03344">
    <property type="entry name" value="GroEL"/>
    <property type="match status" value="1"/>
</dbReference>
<dbReference type="FunFam" id="1.10.560.10:FF:000001">
    <property type="entry name" value="60 kDa chaperonin"/>
    <property type="match status" value="1"/>
</dbReference>
<dbReference type="FunFam" id="3.50.7.10:FF:000001">
    <property type="entry name" value="60 kDa chaperonin"/>
    <property type="match status" value="1"/>
</dbReference>
<dbReference type="Gene3D" id="3.50.7.10">
    <property type="entry name" value="GroEL"/>
    <property type="match status" value="1"/>
</dbReference>
<dbReference type="Gene3D" id="1.10.560.10">
    <property type="entry name" value="GroEL-like equatorial domain"/>
    <property type="match status" value="1"/>
</dbReference>
<dbReference type="Gene3D" id="3.30.260.10">
    <property type="entry name" value="TCP-1-like chaperonin intermediate domain"/>
    <property type="match status" value="1"/>
</dbReference>
<dbReference type="HAMAP" id="MF_00600">
    <property type="entry name" value="CH60"/>
    <property type="match status" value="1"/>
</dbReference>
<dbReference type="InterPro" id="IPR018370">
    <property type="entry name" value="Chaperonin_Cpn60_CS"/>
</dbReference>
<dbReference type="InterPro" id="IPR001844">
    <property type="entry name" value="Cpn60/GroEL"/>
</dbReference>
<dbReference type="InterPro" id="IPR002423">
    <property type="entry name" value="Cpn60/GroEL/TCP-1"/>
</dbReference>
<dbReference type="InterPro" id="IPR027409">
    <property type="entry name" value="GroEL-like_apical_dom_sf"/>
</dbReference>
<dbReference type="InterPro" id="IPR027413">
    <property type="entry name" value="GROEL-like_equatorial_sf"/>
</dbReference>
<dbReference type="InterPro" id="IPR027410">
    <property type="entry name" value="TCP-1-like_intermed_sf"/>
</dbReference>
<dbReference type="NCBIfam" id="TIGR02348">
    <property type="entry name" value="GroEL"/>
    <property type="match status" value="1"/>
</dbReference>
<dbReference type="NCBIfam" id="NF000592">
    <property type="entry name" value="PRK00013.1"/>
    <property type="match status" value="1"/>
</dbReference>
<dbReference type="NCBIfam" id="NF009487">
    <property type="entry name" value="PRK12849.1"/>
    <property type="match status" value="1"/>
</dbReference>
<dbReference type="NCBIfam" id="NF009488">
    <property type="entry name" value="PRK12850.1"/>
    <property type="match status" value="1"/>
</dbReference>
<dbReference type="NCBIfam" id="NF009489">
    <property type="entry name" value="PRK12851.1"/>
    <property type="match status" value="1"/>
</dbReference>
<dbReference type="PANTHER" id="PTHR45633">
    <property type="entry name" value="60 KDA HEAT SHOCK PROTEIN, MITOCHONDRIAL"/>
    <property type="match status" value="1"/>
</dbReference>
<dbReference type="Pfam" id="PF00118">
    <property type="entry name" value="Cpn60_TCP1"/>
    <property type="match status" value="1"/>
</dbReference>
<dbReference type="PRINTS" id="PR00298">
    <property type="entry name" value="CHAPERONIN60"/>
</dbReference>
<dbReference type="SUPFAM" id="SSF52029">
    <property type="entry name" value="GroEL apical domain-like"/>
    <property type="match status" value="1"/>
</dbReference>
<dbReference type="SUPFAM" id="SSF48592">
    <property type="entry name" value="GroEL equatorial domain-like"/>
    <property type="match status" value="1"/>
</dbReference>
<dbReference type="SUPFAM" id="SSF54849">
    <property type="entry name" value="GroEL-intermediate domain like"/>
    <property type="match status" value="1"/>
</dbReference>
<dbReference type="PROSITE" id="PS00296">
    <property type="entry name" value="CHAPERONINS_CPN60"/>
    <property type="match status" value="1"/>
</dbReference>
<evidence type="ECO:0000255" key="1">
    <source>
        <dbReference type="HAMAP-Rule" id="MF_00600"/>
    </source>
</evidence>
<proteinExistence type="inferred from homology"/>
<reference key="1">
    <citation type="journal article" date="2007" name="Nat. Biotechnol.">
        <title>Genome sequence and identification of candidate vaccine antigens from the animal pathogen Dichelobacter nodosus.</title>
        <authorList>
            <person name="Myers G.S.A."/>
            <person name="Parker D."/>
            <person name="Al-Hasani K."/>
            <person name="Kennan R.M."/>
            <person name="Seemann T."/>
            <person name="Ren Q."/>
            <person name="Badger J.H."/>
            <person name="Selengut J.D."/>
            <person name="Deboy R.T."/>
            <person name="Tettelin H."/>
            <person name="Boyce J.D."/>
            <person name="McCarl V.P."/>
            <person name="Han X."/>
            <person name="Nelson W.C."/>
            <person name="Madupu R."/>
            <person name="Mohamoud Y."/>
            <person name="Holley T."/>
            <person name="Fedorova N."/>
            <person name="Khouri H."/>
            <person name="Bottomley S.P."/>
            <person name="Whittington R.J."/>
            <person name="Adler B."/>
            <person name="Songer J.G."/>
            <person name="Rood J.I."/>
            <person name="Paulsen I.T."/>
        </authorList>
    </citation>
    <scope>NUCLEOTIDE SEQUENCE [LARGE SCALE GENOMIC DNA]</scope>
    <source>
        <strain>VCS1703A</strain>
    </source>
</reference>